<dbReference type="EC" id="2.7.7.56" evidence="1"/>
<dbReference type="EMBL" id="CP000494">
    <property type="protein sequence ID" value="ABQ32483.1"/>
    <property type="molecule type" value="Genomic_DNA"/>
</dbReference>
<dbReference type="RefSeq" id="WP_011942703.1">
    <property type="nucleotide sequence ID" value="NC_009485.1"/>
</dbReference>
<dbReference type="SMR" id="A5E8I9"/>
<dbReference type="STRING" id="288000.BBta_0186"/>
<dbReference type="KEGG" id="bbt:BBta_0186"/>
<dbReference type="eggNOG" id="COG0689">
    <property type="taxonomic scope" value="Bacteria"/>
</dbReference>
<dbReference type="HOGENOM" id="CLU_050858_0_0_5"/>
<dbReference type="OrthoDB" id="9802265at2"/>
<dbReference type="Proteomes" id="UP000000246">
    <property type="component" value="Chromosome"/>
</dbReference>
<dbReference type="GO" id="GO:0000175">
    <property type="term" value="F:3'-5'-RNA exonuclease activity"/>
    <property type="evidence" value="ECO:0007669"/>
    <property type="project" value="UniProtKB-UniRule"/>
</dbReference>
<dbReference type="GO" id="GO:0000049">
    <property type="term" value="F:tRNA binding"/>
    <property type="evidence" value="ECO:0007669"/>
    <property type="project" value="UniProtKB-UniRule"/>
</dbReference>
<dbReference type="GO" id="GO:0009022">
    <property type="term" value="F:tRNA nucleotidyltransferase activity"/>
    <property type="evidence" value="ECO:0007669"/>
    <property type="project" value="UniProtKB-UniRule"/>
</dbReference>
<dbReference type="GO" id="GO:0016075">
    <property type="term" value="P:rRNA catabolic process"/>
    <property type="evidence" value="ECO:0007669"/>
    <property type="project" value="UniProtKB-UniRule"/>
</dbReference>
<dbReference type="GO" id="GO:0006364">
    <property type="term" value="P:rRNA processing"/>
    <property type="evidence" value="ECO:0007669"/>
    <property type="project" value="UniProtKB-KW"/>
</dbReference>
<dbReference type="GO" id="GO:0008033">
    <property type="term" value="P:tRNA processing"/>
    <property type="evidence" value="ECO:0007669"/>
    <property type="project" value="UniProtKB-UniRule"/>
</dbReference>
<dbReference type="CDD" id="cd11362">
    <property type="entry name" value="RNase_PH_bact"/>
    <property type="match status" value="1"/>
</dbReference>
<dbReference type="FunFam" id="3.30.230.70:FF:000003">
    <property type="entry name" value="Ribonuclease PH"/>
    <property type="match status" value="1"/>
</dbReference>
<dbReference type="Gene3D" id="3.30.230.70">
    <property type="entry name" value="GHMP Kinase, N-terminal domain"/>
    <property type="match status" value="1"/>
</dbReference>
<dbReference type="HAMAP" id="MF_00564">
    <property type="entry name" value="RNase_PH"/>
    <property type="match status" value="1"/>
</dbReference>
<dbReference type="InterPro" id="IPR001247">
    <property type="entry name" value="ExoRNase_PH_dom1"/>
</dbReference>
<dbReference type="InterPro" id="IPR015847">
    <property type="entry name" value="ExoRNase_PH_dom2"/>
</dbReference>
<dbReference type="InterPro" id="IPR036345">
    <property type="entry name" value="ExoRNase_PH_dom2_sf"/>
</dbReference>
<dbReference type="InterPro" id="IPR027408">
    <property type="entry name" value="PNPase/RNase_PH_dom_sf"/>
</dbReference>
<dbReference type="InterPro" id="IPR020568">
    <property type="entry name" value="Ribosomal_Su5_D2-typ_SF"/>
</dbReference>
<dbReference type="InterPro" id="IPR050080">
    <property type="entry name" value="RNase_PH"/>
</dbReference>
<dbReference type="InterPro" id="IPR002381">
    <property type="entry name" value="RNase_PH_bac-type"/>
</dbReference>
<dbReference type="InterPro" id="IPR018336">
    <property type="entry name" value="RNase_PH_CS"/>
</dbReference>
<dbReference type="NCBIfam" id="TIGR01966">
    <property type="entry name" value="RNasePH"/>
    <property type="match status" value="1"/>
</dbReference>
<dbReference type="PANTHER" id="PTHR11953">
    <property type="entry name" value="EXOSOME COMPLEX COMPONENT"/>
    <property type="match status" value="1"/>
</dbReference>
<dbReference type="PANTHER" id="PTHR11953:SF0">
    <property type="entry name" value="EXOSOME COMPLEX COMPONENT RRP41"/>
    <property type="match status" value="1"/>
</dbReference>
<dbReference type="Pfam" id="PF01138">
    <property type="entry name" value="RNase_PH"/>
    <property type="match status" value="1"/>
</dbReference>
<dbReference type="Pfam" id="PF03725">
    <property type="entry name" value="RNase_PH_C"/>
    <property type="match status" value="1"/>
</dbReference>
<dbReference type="SUPFAM" id="SSF55666">
    <property type="entry name" value="Ribonuclease PH domain 2-like"/>
    <property type="match status" value="1"/>
</dbReference>
<dbReference type="SUPFAM" id="SSF54211">
    <property type="entry name" value="Ribosomal protein S5 domain 2-like"/>
    <property type="match status" value="1"/>
</dbReference>
<dbReference type="PROSITE" id="PS01277">
    <property type="entry name" value="RIBONUCLEASE_PH"/>
    <property type="match status" value="1"/>
</dbReference>
<name>RNPH_BRASB</name>
<feature type="chain" id="PRO_1000024778" description="Ribonuclease PH">
    <location>
        <begin position="1"/>
        <end position="237"/>
    </location>
</feature>
<feature type="binding site" evidence="1">
    <location>
        <position position="86"/>
    </location>
    <ligand>
        <name>phosphate</name>
        <dbReference type="ChEBI" id="CHEBI:43474"/>
        <note>substrate</note>
    </ligand>
</feature>
<feature type="binding site" evidence="1">
    <location>
        <begin position="124"/>
        <end position="126"/>
    </location>
    <ligand>
        <name>phosphate</name>
        <dbReference type="ChEBI" id="CHEBI:43474"/>
        <note>substrate</note>
    </ligand>
</feature>
<accession>A5E8I9</accession>
<gene>
    <name evidence="1" type="primary">rph</name>
    <name type="ordered locus">BBta_0186</name>
</gene>
<comment type="function">
    <text evidence="1">Phosphorolytic 3'-5' exoribonuclease that plays an important role in tRNA 3'-end maturation. Removes nucleotide residues following the 3'-CCA terminus of tRNAs; can also add nucleotides to the ends of RNA molecules by using nucleoside diphosphates as substrates, but this may not be physiologically important. Probably plays a role in initiation of 16S rRNA degradation (leading to ribosome degradation) during starvation.</text>
</comment>
<comment type="catalytic activity">
    <reaction evidence="1">
        <text>tRNA(n+1) + phosphate = tRNA(n) + a ribonucleoside 5'-diphosphate</text>
        <dbReference type="Rhea" id="RHEA:10628"/>
        <dbReference type="Rhea" id="RHEA-COMP:17343"/>
        <dbReference type="Rhea" id="RHEA-COMP:17344"/>
        <dbReference type="ChEBI" id="CHEBI:43474"/>
        <dbReference type="ChEBI" id="CHEBI:57930"/>
        <dbReference type="ChEBI" id="CHEBI:173114"/>
        <dbReference type="EC" id="2.7.7.56"/>
    </reaction>
</comment>
<comment type="subunit">
    <text evidence="1">Homohexameric ring arranged as a trimer of dimers.</text>
</comment>
<comment type="similarity">
    <text evidence="1">Belongs to the RNase PH family.</text>
</comment>
<reference key="1">
    <citation type="journal article" date="2007" name="Science">
        <title>Legumes symbioses: absence of nod genes in photosynthetic bradyrhizobia.</title>
        <authorList>
            <person name="Giraud E."/>
            <person name="Moulin L."/>
            <person name="Vallenet D."/>
            <person name="Barbe V."/>
            <person name="Cytryn E."/>
            <person name="Avarre J.-C."/>
            <person name="Jaubert M."/>
            <person name="Simon D."/>
            <person name="Cartieaux F."/>
            <person name="Prin Y."/>
            <person name="Bena G."/>
            <person name="Hannibal L."/>
            <person name="Fardoux J."/>
            <person name="Kojadinovic M."/>
            <person name="Vuillet L."/>
            <person name="Lajus A."/>
            <person name="Cruveiller S."/>
            <person name="Rouy Z."/>
            <person name="Mangenot S."/>
            <person name="Segurens B."/>
            <person name="Dossat C."/>
            <person name="Franck W.L."/>
            <person name="Chang W.-S."/>
            <person name="Saunders E."/>
            <person name="Bruce D."/>
            <person name="Richardson P."/>
            <person name="Normand P."/>
            <person name="Dreyfus B."/>
            <person name="Pignol D."/>
            <person name="Stacey G."/>
            <person name="Emerich D."/>
            <person name="Vermeglio A."/>
            <person name="Medigue C."/>
            <person name="Sadowsky M."/>
        </authorList>
    </citation>
    <scope>NUCLEOTIDE SEQUENCE [LARGE SCALE GENOMIC DNA]</scope>
    <source>
        <strain>BTAi1 / ATCC BAA-1182</strain>
    </source>
</reference>
<sequence>MRPSRRAPDELRPVSLERGVVKYAEGSCLVKFGDTHVLVTATLEDRLPPWLKGQGRGWITAEYGMLPRATLERTRREASAGKQTGRTVEIQRLIGRSLRTAIDLEALGERQITVDCDVLQADGGTRTASITGAWVALADCIKWMKTRNMLKTEVLRANVAAISCGIYNGTPVLDLDYAEDSEAETDANFVMTGDGRIIEVQGTAEKTPFTEAEFLALMALARKGVARLVDLQKMAVA</sequence>
<protein>
    <recommendedName>
        <fullName evidence="1">Ribonuclease PH</fullName>
        <shortName evidence="1">RNase PH</shortName>
        <ecNumber evidence="1">2.7.7.56</ecNumber>
    </recommendedName>
    <alternativeName>
        <fullName evidence="1">tRNA nucleotidyltransferase</fullName>
    </alternativeName>
</protein>
<organism>
    <name type="scientific">Bradyrhizobium sp. (strain BTAi1 / ATCC BAA-1182)</name>
    <dbReference type="NCBI Taxonomy" id="288000"/>
    <lineage>
        <taxon>Bacteria</taxon>
        <taxon>Pseudomonadati</taxon>
        <taxon>Pseudomonadota</taxon>
        <taxon>Alphaproteobacteria</taxon>
        <taxon>Hyphomicrobiales</taxon>
        <taxon>Nitrobacteraceae</taxon>
        <taxon>Bradyrhizobium</taxon>
    </lineage>
</organism>
<keyword id="KW-0548">Nucleotidyltransferase</keyword>
<keyword id="KW-1185">Reference proteome</keyword>
<keyword id="KW-0694">RNA-binding</keyword>
<keyword id="KW-0698">rRNA processing</keyword>
<keyword id="KW-0808">Transferase</keyword>
<keyword id="KW-0819">tRNA processing</keyword>
<keyword id="KW-0820">tRNA-binding</keyword>
<evidence type="ECO:0000255" key="1">
    <source>
        <dbReference type="HAMAP-Rule" id="MF_00564"/>
    </source>
</evidence>
<proteinExistence type="inferred from homology"/>